<gene>
    <name type="primary">xylH</name>
    <name type="ordered locus">HI_1109</name>
</gene>
<evidence type="ECO:0000250" key="1"/>
<evidence type="ECO:0000255" key="2"/>
<evidence type="ECO:0000305" key="3"/>
<comment type="function">
    <text evidence="1">Part of the binding-protein-dependent transport system for D-xylose. Probably responsible for the translocation of the substrate across the membrane (By similarity).</text>
</comment>
<comment type="subcellular location">
    <subcellularLocation>
        <location evidence="3">Cell inner membrane</location>
        <topology evidence="3">Multi-pass membrane protein</topology>
    </subcellularLocation>
</comment>
<comment type="similarity">
    <text evidence="3">Belongs to the binding-protein-dependent transport system permease family. AraH/RbsC subfamily.</text>
</comment>
<feature type="chain" id="PRO_0000060237" description="Xylose transport system permease protein XylH">
    <location>
        <begin position="1"/>
        <end position="375"/>
    </location>
</feature>
<feature type="transmembrane region" description="Helical" evidence="2">
    <location>
        <begin position="9"/>
        <end position="29"/>
    </location>
</feature>
<feature type="transmembrane region" description="Helical" evidence="2">
    <location>
        <begin position="52"/>
        <end position="72"/>
    </location>
</feature>
<feature type="transmembrane region" description="Helical" evidence="2">
    <location>
        <begin position="85"/>
        <end position="105"/>
    </location>
</feature>
<feature type="transmembrane region" description="Helical" evidence="2">
    <location>
        <begin position="118"/>
        <end position="138"/>
    </location>
</feature>
<feature type="transmembrane region" description="Helical" evidence="2">
    <location>
        <begin position="159"/>
        <end position="179"/>
    </location>
</feature>
<feature type="transmembrane region" description="Helical" evidence="2">
    <location>
        <begin position="199"/>
        <end position="219"/>
    </location>
</feature>
<feature type="transmembrane region" description="Helical" evidence="2">
    <location>
        <begin position="220"/>
        <end position="240"/>
    </location>
</feature>
<feature type="transmembrane region" description="Helical" evidence="2">
    <location>
        <begin position="271"/>
        <end position="291"/>
    </location>
</feature>
<feature type="transmembrane region" description="Helical" evidence="2">
    <location>
        <begin position="319"/>
        <end position="339"/>
    </location>
</feature>
<feature type="transmembrane region" description="Helical" evidence="2">
    <location>
        <begin position="348"/>
        <end position="368"/>
    </location>
</feature>
<reference key="1">
    <citation type="journal article" date="1995" name="Science">
        <title>Whole-genome random sequencing and assembly of Haemophilus influenzae Rd.</title>
        <authorList>
            <person name="Fleischmann R.D."/>
            <person name="Adams M.D."/>
            <person name="White O."/>
            <person name="Clayton R.A."/>
            <person name="Kirkness E.F."/>
            <person name="Kerlavage A.R."/>
            <person name="Bult C.J."/>
            <person name="Tomb J.-F."/>
            <person name="Dougherty B.A."/>
            <person name="Merrick J.M."/>
            <person name="McKenney K."/>
            <person name="Sutton G.G."/>
            <person name="FitzHugh W."/>
            <person name="Fields C.A."/>
            <person name="Gocayne J.D."/>
            <person name="Scott J.D."/>
            <person name="Shirley R."/>
            <person name="Liu L.-I."/>
            <person name="Glodek A."/>
            <person name="Kelley J.M."/>
            <person name="Weidman J.F."/>
            <person name="Phillips C.A."/>
            <person name="Spriggs T."/>
            <person name="Hedblom E."/>
            <person name="Cotton M.D."/>
            <person name="Utterback T.R."/>
            <person name="Hanna M.C."/>
            <person name="Nguyen D.T."/>
            <person name="Saudek D.M."/>
            <person name="Brandon R.C."/>
            <person name="Fine L.D."/>
            <person name="Fritchman J.L."/>
            <person name="Fuhrmann J.L."/>
            <person name="Geoghagen N.S.M."/>
            <person name="Gnehm C.L."/>
            <person name="McDonald L.A."/>
            <person name="Small K.V."/>
            <person name="Fraser C.M."/>
            <person name="Smith H.O."/>
            <person name="Venter J.C."/>
        </authorList>
    </citation>
    <scope>NUCLEOTIDE SEQUENCE [LARGE SCALE GENOMIC DNA]</scope>
    <source>
        <strain>ATCC 51907 / DSM 11121 / KW20 / Rd</strain>
    </source>
</reference>
<sequence length="375" mass="39510">MFKLKSVNLQVYIMLIAIAVIMAFFSVATDGAYLSARNISNLLRQTSITGXLAIGMVFVIISAEIDLSVGSLMGLLGGFAAIADVWWGFPLPVTIIATIALGLIFGIWNGWWVAYRKVPSFIVTLAGYLAFRGILIGLTNGTTVSPISGTMTVIGQGYLSDIAGVILGGIAVIGFVLWGNYQRRSRQQLQLEVSALSKDFTKYALFAVIVLGAIYLLNDYRGIPFPVLVLAVLAILGLFLSRKTSFGRHVYAIGGNIDAAKLSGINVEKTKLIIFAMNGVLVAIAGLILSARLGAGSPSAGQNAELDAIAACVIGGASLAGGVGSVFGVVIGALIIASLDNGMSMLDVPTFWQYIVKGGILLLAVWIDTSNKKKM</sequence>
<name>XYLH_HAEIN</name>
<proteinExistence type="inferred from homology"/>
<keyword id="KW-0997">Cell inner membrane</keyword>
<keyword id="KW-1003">Cell membrane</keyword>
<keyword id="KW-0472">Membrane</keyword>
<keyword id="KW-1185">Reference proteome</keyword>
<keyword id="KW-0762">Sugar transport</keyword>
<keyword id="KW-0812">Transmembrane</keyword>
<keyword id="KW-1133">Transmembrane helix</keyword>
<keyword id="KW-0813">Transport</keyword>
<organism>
    <name type="scientific">Haemophilus influenzae (strain ATCC 51907 / DSM 11121 / KW20 / Rd)</name>
    <dbReference type="NCBI Taxonomy" id="71421"/>
    <lineage>
        <taxon>Bacteria</taxon>
        <taxon>Pseudomonadati</taxon>
        <taxon>Pseudomonadota</taxon>
        <taxon>Gammaproteobacteria</taxon>
        <taxon>Pasteurellales</taxon>
        <taxon>Pasteurellaceae</taxon>
        <taxon>Haemophilus</taxon>
    </lineage>
</organism>
<accession>P45045</accession>
<dbReference type="EMBL" id="L42023">
    <property type="protein sequence ID" value="AAC22763.1"/>
    <property type="molecule type" value="Genomic_DNA"/>
</dbReference>
<dbReference type="PIR" id="A64183">
    <property type="entry name" value="A64183"/>
</dbReference>
<dbReference type="RefSeq" id="NP_439266.1">
    <property type="nucleotide sequence ID" value="NC_000907.1"/>
</dbReference>
<dbReference type="STRING" id="71421.HI_1109"/>
<dbReference type="EnsemblBacteria" id="AAC22763">
    <property type="protein sequence ID" value="AAC22763"/>
    <property type="gene ID" value="HI_1109"/>
</dbReference>
<dbReference type="KEGG" id="hin:HI_1109"/>
<dbReference type="PATRIC" id="fig|71421.8.peg.1158"/>
<dbReference type="eggNOG" id="COG4214">
    <property type="taxonomic scope" value="Bacteria"/>
</dbReference>
<dbReference type="HOGENOM" id="CLU_028880_2_0_6"/>
<dbReference type="OrthoDB" id="5422926at2"/>
<dbReference type="PhylomeDB" id="P45045"/>
<dbReference type="BioCyc" id="HINF71421:G1GJ1-1144-MONOMER"/>
<dbReference type="Proteomes" id="UP000000579">
    <property type="component" value="Chromosome"/>
</dbReference>
<dbReference type="GO" id="GO:0005886">
    <property type="term" value="C:plasma membrane"/>
    <property type="evidence" value="ECO:0000318"/>
    <property type="project" value="GO_Central"/>
</dbReference>
<dbReference type="GO" id="GO:0022857">
    <property type="term" value="F:transmembrane transporter activity"/>
    <property type="evidence" value="ECO:0007669"/>
    <property type="project" value="InterPro"/>
</dbReference>
<dbReference type="CDD" id="cd06579">
    <property type="entry name" value="TM_PBP1_transp_AraH_like"/>
    <property type="match status" value="1"/>
</dbReference>
<dbReference type="InterPro" id="IPR001851">
    <property type="entry name" value="ABC_transp_permease"/>
</dbReference>
<dbReference type="PANTHER" id="PTHR32196">
    <property type="entry name" value="ABC TRANSPORTER PERMEASE PROTEIN YPHD-RELATED-RELATED"/>
    <property type="match status" value="1"/>
</dbReference>
<dbReference type="PANTHER" id="PTHR32196:SF32">
    <property type="entry name" value="XYLOSE TRANSPORT SYSTEM PERMEASE PROTEIN XYLH"/>
    <property type="match status" value="1"/>
</dbReference>
<dbReference type="Pfam" id="PF02653">
    <property type="entry name" value="BPD_transp_2"/>
    <property type="match status" value="1"/>
</dbReference>
<protein>
    <recommendedName>
        <fullName>Xylose transport system permease protein XylH</fullName>
    </recommendedName>
</protein>